<comment type="function">
    <text evidence="1">May catalyze the formation of 25-hydroxycholesterol from cholesterol.</text>
</comment>
<comment type="cofactor">
    <cofactor evidence="1">
        <name>Fe cation</name>
        <dbReference type="ChEBI" id="CHEBI:24875"/>
    </cofactor>
</comment>
<comment type="subcellular location">
    <subcellularLocation>
        <location evidence="1">Endoplasmic reticulum membrane</location>
        <topology evidence="1">Multi-pass membrane protein</topology>
    </subcellularLocation>
</comment>
<comment type="similarity">
    <text evidence="3">Belongs to the sterol desaturase family.</text>
</comment>
<gene>
    <name type="primary">ch25hl1.1</name>
    <name type="ORF">si:dkey-24l11.8</name>
    <name type="ORF">zgc:110696</name>
</gene>
<organism>
    <name type="scientific">Danio rerio</name>
    <name type="common">Zebrafish</name>
    <name type="synonym">Brachydanio rerio</name>
    <dbReference type="NCBI Taxonomy" id="7955"/>
    <lineage>
        <taxon>Eukaryota</taxon>
        <taxon>Metazoa</taxon>
        <taxon>Chordata</taxon>
        <taxon>Craniata</taxon>
        <taxon>Vertebrata</taxon>
        <taxon>Euteleostomi</taxon>
        <taxon>Actinopterygii</taxon>
        <taxon>Neopterygii</taxon>
        <taxon>Teleostei</taxon>
        <taxon>Ostariophysi</taxon>
        <taxon>Cypriniformes</taxon>
        <taxon>Danionidae</taxon>
        <taxon>Danioninae</taxon>
        <taxon>Danio</taxon>
    </lineage>
</organism>
<sequence>MWNISEVVFQLPTSSASDRVLQPLWDYLLLRHYTLISSPFFPVLLAFSSYIIFSVPFAVLDVLGEKAPLFKYKIQKDRRPTVGMMLRTLWTAVYNHLVFVLPAVLITNVVMPMPPLPTVAPTVWEMFSGGLGALLVFDTQYFLWHMVHHKNPHLYRWVHAIHHDYISPFSWSTQHLSGVELMTVGFWSNIDPILLKCHPLTVWTLTVYSIWMSVEDHIGYDLPFSPGHLVPFGLLGGAMAHDMHHQKPSSNFAPFFSHWDKIFGTAITVKLTQKSEKEKQVA</sequence>
<name>C25L1_DANRE</name>
<dbReference type="EC" id="1.14.99.-"/>
<dbReference type="EMBL" id="BX470164">
    <property type="protein sequence ID" value="CAK10821.1"/>
    <property type="molecule type" value="Genomic_DNA"/>
</dbReference>
<dbReference type="EMBL" id="BC092984">
    <property type="protein sequence ID" value="AAH92984.1"/>
    <property type="molecule type" value="mRNA"/>
</dbReference>
<dbReference type="RefSeq" id="NP_001017865.1">
    <property type="nucleotide sequence ID" value="NM_001017865.1"/>
</dbReference>
<dbReference type="FunCoup" id="Q567X1">
    <property type="interactions" value="4"/>
</dbReference>
<dbReference type="STRING" id="7955.ENSDARP00000057552"/>
<dbReference type="GlyCosmos" id="Q567X1">
    <property type="glycosylation" value="1 site, No reported glycans"/>
</dbReference>
<dbReference type="PaxDb" id="7955-ENSDARP00000057552"/>
<dbReference type="Ensembl" id="ENSDART00000057553">
    <property type="protein sequence ID" value="ENSDARP00000057552"/>
    <property type="gene ID" value="ENSDARG00000039381"/>
</dbReference>
<dbReference type="Ensembl" id="ENSDART00000181825">
    <property type="protein sequence ID" value="ENSDARP00000147438"/>
    <property type="gene ID" value="ENSDARG00000113169"/>
</dbReference>
<dbReference type="Ensembl" id="ENSDART00000187833">
    <property type="protein sequence ID" value="ENSDARP00000145701"/>
    <property type="gene ID" value="ENSDARG00000109469"/>
</dbReference>
<dbReference type="GeneID" id="336673"/>
<dbReference type="KEGG" id="dre:336673"/>
<dbReference type="AGR" id="ZFIN:ZDB-GENE-030131-8617"/>
<dbReference type="CTD" id="336673"/>
<dbReference type="ZFIN" id="ZDB-GENE-030131-8617">
    <property type="gene designation" value="ch25hl1.1"/>
</dbReference>
<dbReference type="eggNOG" id="KOG0873">
    <property type="taxonomic scope" value="Eukaryota"/>
</dbReference>
<dbReference type="HOGENOM" id="CLU_047036_5_1_1"/>
<dbReference type="InParanoid" id="Q567X1"/>
<dbReference type="OMA" id="QLYRWIH"/>
<dbReference type="OrthoDB" id="1658724at2759"/>
<dbReference type="PhylomeDB" id="Q567X1"/>
<dbReference type="TreeFam" id="TF353265"/>
<dbReference type="PRO" id="PR:Q567X1"/>
<dbReference type="Proteomes" id="UP000000437">
    <property type="component" value="Alternate scaffold 18"/>
</dbReference>
<dbReference type="Proteomes" id="UP000000437">
    <property type="component" value="Chromosome 18"/>
</dbReference>
<dbReference type="Bgee" id="ENSDARG00000039381">
    <property type="expression patterns" value="Expressed in zone of skin and 11 other cell types or tissues"/>
</dbReference>
<dbReference type="ExpressionAtlas" id="Q567X1">
    <property type="expression patterns" value="baseline and differential"/>
</dbReference>
<dbReference type="GO" id="GO:0005789">
    <property type="term" value="C:endoplasmic reticulum membrane"/>
    <property type="evidence" value="ECO:0000318"/>
    <property type="project" value="GO_Central"/>
</dbReference>
<dbReference type="GO" id="GO:0000254">
    <property type="term" value="F:C-4 methylsterol oxidase activity"/>
    <property type="evidence" value="ECO:0000318"/>
    <property type="project" value="GO_Central"/>
</dbReference>
<dbReference type="GO" id="GO:0005506">
    <property type="term" value="F:iron ion binding"/>
    <property type="evidence" value="ECO:0007669"/>
    <property type="project" value="InterPro"/>
</dbReference>
<dbReference type="GO" id="GO:0008395">
    <property type="term" value="F:steroid hydroxylase activity"/>
    <property type="evidence" value="ECO:0000318"/>
    <property type="project" value="GO_Central"/>
</dbReference>
<dbReference type="GO" id="GO:0008203">
    <property type="term" value="P:cholesterol metabolic process"/>
    <property type="evidence" value="ECO:0000318"/>
    <property type="project" value="GO_Central"/>
</dbReference>
<dbReference type="GO" id="GO:0016126">
    <property type="term" value="P:sterol biosynthetic process"/>
    <property type="evidence" value="ECO:0000318"/>
    <property type="project" value="GO_Central"/>
</dbReference>
<dbReference type="InterPro" id="IPR006694">
    <property type="entry name" value="Fatty_acid_hydroxylase"/>
</dbReference>
<dbReference type="InterPro" id="IPR050307">
    <property type="entry name" value="Sterol_Desaturase_Related"/>
</dbReference>
<dbReference type="PANTHER" id="PTHR11863">
    <property type="entry name" value="STEROL DESATURASE"/>
    <property type="match status" value="1"/>
</dbReference>
<dbReference type="Pfam" id="PF04116">
    <property type="entry name" value="FA_hydroxylase"/>
    <property type="match status" value="1"/>
</dbReference>
<evidence type="ECO:0000250" key="1"/>
<evidence type="ECO:0000255" key="2"/>
<evidence type="ECO:0000305" key="3"/>
<protein>
    <recommendedName>
        <fullName>Cholesterol 25-hydroxylase-like protein 1, member 1</fullName>
        <ecNumber>1.14.99.-</ecNumber>
    </recommendedName>
</protein>
<proteinExistence type="evidence at transcript level"/>
<feature type="chain" id="PRO_0000226806" description="Cholesterol 25-hydroxylase-like protein 1, member 1">
    <location>
        <begin position="1"/>
        <end position="282"/>
    </location>
</feature>
<feature type="transmembrane region" description="Helical" evidence="2">
    <location>
        <begin position="40"/>
        <end position="60"/>
    </location>
</feature>
<feature type="transmembrane region" description="Helical" evidence="2">
    <location>
        <begin position="85"/>
        <end position="107"/>
    </location>
</feature>
<feature type="transmembrane region" description="Helical" evidence="2">
    <location>
        <begin position="127"/>
        <end position="147"/>
    </location>
</feature>
<feature type="domain" description="Fatty acid hydroxylase" evidence="2">
    <location>
        <begin position="133"/>
        <end position="265"/>
    </location>
</feature>
<feature type="short sequence motif" description="Histidine box-1">
    <location>
        <begin position="144"/>
        <end position="148"/>
    </location>
</feature>
<feature type="short sequence motif" description="Histidine box-2">
    <location>
        <begin position="159"/>
        <end position="163"/>
    </location>
</feature>
<feature type="short sequence motif" description="Histidine box-3">
    <location>
        <begin position="240"/>
        <end position="246"/>
    </location>
</feature>
<feature type="glycosylation site" description="N-linked (GlcNAc...) asparagine" evidence="2">
    <location>
        <position position="3"/>
    </location>
</feature>
<feature type="sequence conflict" description="In Ref. 2; AAH92984." evidence="3" ref="2">
    <original>V</original>
    <variation>L</variation>
    <location>
        <position position="20"/>
    </location>
</feature>
<feature type="sequence conflict" description="In Ref. 2; AAH92984." evidence="3" ref="2">
    <original>R</original>
    <variation>S</variation>
    <location>
        <position position="79"/>
    </location>
</feature>
<feature type="sequence conflict" description="In Ref. 2; AAH92984." evidence="3" ref="2">
    <original>V</original>
    <variation>M</variation>
    <location>
        <position position="109"/>
    </location>
</feature>
<accession>Q567X1</accession>
<accession>Q1LX56</accession>
<keyword id="KW-0256">Endoplasmic reticulum</keyword>
<keyword id="KW-0325">Glycoprotein</keyword>
<keyword id="KW-0408">Iron</keyword>
<keyword id="KW-0444">Lipid biosynthesis</keyword>
<keyword id="KW-0443">Lipid metabolism</keyword>
<keyword id="KW-0472">Membrane</keyword>
<keyword id="KW-0479">Metal-binding</keyword>
<keyword id="KW-0503">Monooxygenase</keyword>
<keyword id="KW-0560">Oxidoreductase</keyword>
<keyword id="KW-1185">Reference proteome</keyword>
<keyword id="KW-0752">Steroid biosynthesis</keyword>
<keyword id="KW-0753">Steroid metabolism</keyword>
<keyword id="KW-0756">Sterol biosynthesis</keyword>
<keyword id="KW-1207">Sterol metabolism</keyword>
<keyword id="KW-0812">Transmembrane</keyword>
<keyword id="KW-1133">Transmembrane helix</keyword>
<reference key="1">
    <citation type="journal article" date="2013" name="Nature">
        <title>The zebrafish reference genome sequence and its relationship to the human genome.</title>
        <authorList>
            <person name="Howe K."/>
            <person name="Clark M.D."/>
            <person name="Torroja C.F."/>
            <person name="Torrance J."/>
            <person name="Berthelot C."/>
            <person name="Muffato M."/>
            <person name="Collins J.E."/>
            <person name="Humphray S."/>
            <person name="McLaren K."/>
            <person name="Matthews L."/>
            <person name="McLaren S."/>
            <person name="Sealy I."/>
            <person name="Caccamo M."/>
            <person name="Churcher C."/>
            <person name="Scott C."/>
            <person name="Barrett J.C."/>
            <person name="Koch R."/>
            <person name="Rauch G.J."/>
            <person name="White S."/>
            <person name="Chow W."/>
            <person name="Kilian B."/>
            <person name="Quintais L.T."/>
            <person name="Guerra-Assuncao J.A."/>
            <person name="Zhou Y."/>
            <person name="Gu Y."/>
            <person name="Yen J."/>
            <person name="Vogel J.H."/>
            <person name="Eyre T."/>
            <person name="Redmond S."/>
            <person name="Banerjee R."/>
            <person name="Chi J."/>
            <person name="Fu B."/>
            <person name="Langley E."/>
            <person name="Maguire S.F."/>
            <person name="Laird G.K."/>
            <person name="Lloyd D."/>
            <person name="Kenyon E."/>
            <person name="Donaldson S."/>
            <person name="Sehra H."/>
            <person name="Almeida-King J."/>
            <person name="Loveland J."/>
            <person name="Trevanion S."/>
            <person name="Jones M."/>
            <person name="Quail M."/>
            <person name="Willey D."/>
            <person name="Hunt A."/>
            <person name="Burton J."/>
            <person name="Sims S."/>
            <person name="McLay K."/>
            <person name="Plumb B."/>
            <person name="Davis J."/>
            <person name="Clee C."/>
            <person name="Oliver K."/>
            <person name="Clark R."/>
            <person name="Riddle C."/>
            <person name="Elliot D."/>
            <person name="Threadgold G."/>
            <person name="Harden G."/>
            <person name="Ware D."/>
            <person name="Begum S."/>
            <person name="Mortimore B."/>
            <person name="Kerry G."/>
            <person name="Heath P."/>
            <person name="Phillimore B."/>
            <person name="Tracey A."/>
            <person name="Corby N."/>
            <person name="Dunn M."/>
            <person name="Johnson C."/>
            <person name="Wood J."/>
            <person name="Clark S."/>
            <person name="Pelan S."/>
            <person name="Griffiths G."/>
            <person name="Smith M."/>
            <person name="Glithero R."/>
            <person name="Howden P."/>
            <person name="Barker N."/>
            <person name="Lloyd C."/>
            <person name="Stevens C."/>
            <person name="Harley J."/>
            <person name="Holt K."/>
            <person name="Panagiotidis G."/>
            <person name="Lovell J."/>
            <person name="Beasley H."/>
            <person name="Henderson C."/>
            <person name="Gordon D."/>
            <person name="Auger K."/>
            <person name="Wright D."/>
            <person name="Collins J."/>
            <person name="Raisen C."/>
            <person name="Dyer L."/>
            <person name="Leung K."/>
            <person name="Robertson L."/>
            <person name="Ambridge K."/>
            <person name="Leongamornlert D."/>
            <person name="McGuire S."/>
            <person name="Gilderthorp R."/>
            <person name="Griffiths C."/>
            <person name="Manthravadi D."/>
            <person name="Nichol S."/>
            <person name="Barker G."/>
            <person name="Whitehead S."/>
            <person name="Kay M."/>
            <person name="Brown J."/>
            <person name="Murnane C."/>
            <person name="Gray E."/>
            <person name="Humphries M."/>
            <person name="Sycamore N."/>
            <person name="Barker D."/>
            <person name="Saunders D."/>
            <person name="Wallis J."/>
            <person name="Babbage A."/>
            <person name="Hammond S."/>
            <person name="Mashreghi-Mohammadi M."/>
            <person name="Barr L."/>
            <person name="Martin S."/>
            <person name="Wray P."/>
            <person name="Ellington A."/>
            <person name="Matthews N."/>
            <person name="Ellwood M."/>
            <person name="Woodmansey R."/>
            <person name="Clark G."/>
            <person name="Cooper J."/>
            <person name="Tromans A."/>
            <person name="Grafham D."/>
            <person name="Skuce C."/>
            <person name="Pandian R."/>
            <person name="Andrews R."/>
            <person name="Harrison E."/>
            <person name="Kimberley A."/>
            <person name="Garnett J."/>
            <person name="Fosker N."/>
            <person name="Hall R."/>
            <person name="Garner P."/>
            <person name="Kelly D."/>
            <person name="Bird C."/>
            <person name="Palmer S."/>
            <person name="Gehring I."/>
            <person name="Berger A."/>
            <person name="Dooley C.M."/>
            <person name="Ersan-Urun Z."/>
            <person name="Eser C."/>
            <person name="Geiger H."/>
            <person name="Geisler M."/>
            <person name="Karotki L."/>
            <person name="Kirn A."/>
            <person name="Konantz J."/>
            <person name="Konantz M."/>
            <person name="Oberlander M."/>
            <person name="Rudolph-Geiger S."/>
            <person name="Teucke M."/>
            <person name="Lanz C."/>
            <person name="Raddatz G."/>
            <person name="Osoegawa K."/>
            <person name="Zhu B."/>
            <person name="Rapp A."/>
            <person name="Widaa S."/>
            <person name="Langford C."/>
            <person name="Yang F."/>
            <person name="Schuster S.C."/>
            <person name="Carter N.P."/>
            <person name="Harrow J."/>
            <person name="Ning Z."/>
            <person name="Herrero J."/>
            <person name="Searle S.M."/>
            <person name="Enright A."/>
            <person name="Geisler R."/>
            <person name="Plasterk R.H."/>
            <person name="Lee C."/>
            <person name="Westerfield M."/>
            <person name="de Jong P.J."/>
            <person name="Zon L.I."/>
            <person name="Postlethwait J.H."/>
            <person name="Nusslein-Volhard C."/>
            <person name="Hubbard T.J."/>
            <person name="Roest Crollius H."/>
            <person name="Rogers J."/>
            <person name="Stemple D.L."/>
        </authorList>
    </citation>
    <scope>NUCLEOTIDE SEQUENCE [LARGE SCALE GENOMIC DNA]</scope>
    <source>
        <strain>Tuebingen</strain>
    </source>
</reference>
<reference key="2">
    <citation type="submission" date="2005-04" db="EMBL/GenBank/DDBJ databases">
        <authorList>
            <consortium name="NIH - Zebrafish Gene Collection (ZGC) project"/>
        </authorList>
    </citation>
    <scope>NUCLEOTIDE SEQUENCE [LARGE SCALE MRNA]</scope>
    <source>
        <tissue>Embryo</tissue>
    </source>
</reference>